<feature type="chain" id="PRO_0000372686" description="NADH-ubiquinone oxidoreductase chain 2">
    <location>
        <begin position="1"/>
        <end position="341"/>
    </location>
</feature>
<feature type="transmembrane region" description="Helical" evidence="3">
    <location>
        <begin position="8"/>
        <end position="28"/>
    </location>
</feature>
<feature type="transmembrane region" description="Helical" evidence="3">
    <location>
        <begin position="61"/>
        <end position="81"/>
    </location>
</feature>
<feature type="transmembrane region" description="Helical" evidence="3">
    <location>
        <begin position="95"/>
        <end position="117"/>
    </location>
</feature>
<feature type="transmembrane region" description="Helical" evidence="3">
    <location>
        <begin position="145"/>
        <end position="165"/>
    </location>
</feature>
<feature type="transmembrane region" description="Helical" evidence="3">
    <location>
        <begin position="195"/>
        <end position="215"/>
    </location>
</feature>
<feature type="transmembrane region" description="Helical" evidence="3">
    <location>
        <begin position="238"/>
        <end position="258"/>
    </location>
</feature>
<feature type="transmembrane region" description="Helical" evidence="3">
    <location>
        <begin position="266"/>
        <end position="286"/>
    </location>
</feature>
<feature type="transmembrane region" description="Helical" evidence="3">
    <location>
        <begin position="320"/>
        <end position="340"/>
    </location>
</feature>
<organism>
    <name type="scientific">Aedes aegypti</name>
    <name type="common">Yellowfever mosquito</name>
    <name type="synonym">Culex aegypti</name>
    <dbReference type="NCBI Taxonomy" id="7159"/>
    <lineage>
        <taxon>Eukaryota</taxon>
        <taxon>Metazoa</taxon>
        <taxon>Ecdysozoa</taxon>
        <taxon>Arthropoda</taxon>
        <taxon>Hexapoda</taxon>
        <taxon>Insecta</taxon>
        <taxon>Pterygota</taxon>
        <taxon>Neoptera</taxon>
        <taxon>Endopterygota</taxon>
        <taxon>Diptera</taxon>
        <taxon>Nematocera</taxon>
        <taxon>Culicoidea</taxon>
        <taxon>Culicidae</taxon>
        <taxon>Culicinae</taxon>
        <taxon>Aedini</taxon>
        <taxon>Aedes</taxon>
        <taxon>Stegomyia</taxon>
    </lineage>
</organism>
<geneLocation type="mitochondrion" evidence="5"/>
<name>NU2M_AEDAE</name>
<accession>B0FWC6</accession>
<reference evidence="5" key="1">
    <citation type="submission" date="2007-12" db="EMBL/GenBank/DDBJ databases">
        <title>The mitochondrial genome of the Yellow fever mosquito - Aedes aegypti.</title>
        <authorList>
            <person name="Lobo N.F."/>
            <person name="Lovin D."/>
            <person name="DeBruyn B."/>
            <person name="Puiu D."/>
            <person name="Shumway M."/>
            <person name="Haas B."/>
            <person name="Nene V."/>
            <person name="Severson D.W."/>
        </authorList>
    </citation>
    <scope>NUCLEOTIDE SEQUENCE [LARGE SCALE GENOMIC DNA]</scope>
    <source>
        <strain evidence="5">LVPib12</strain>
    </source>
</reference>
<comment type="function">
    <text evidence="1 4">Core subunit of the mitochondrial membrane respiratory chain NADH dehydrogenase (Complex I) that is believed to belong to the minimal assembly required for catalysis. Complex I functions in the transfer of electrons from NADH to the respiratory chain. The immediate electron acceptor for the enzyme is believed to be ubiquinone (By similarity).</text>
</comment>
<comment type="catalytic activity">
    <reaction>
        <text>a ubiquinone + NADH + 5 H(+)(in) = a ubiquinol + NAD(+) + 4 H(+)(out)</text>
        <dbReference type="Rhea" id="RHEA:29091"/>
        <dbReference type="Rhea" id="RHEA-COMP:9565"/>
        <dbReference type="Rhea" id="RHEA-COMP:9566"/>
        <dbReference type="ChEBI" id="CHEBI:15378"/>
        <dbReference type="ChEBI" id="CHEBI:16389"/>
        <dbReference type="ChEBI" id="CHEBI:17976"/>
        <dbReference type="ChEBI" id="CHEBI:57540"/>
        <dbReference type="ChEBI" id="CHEBI:57945"/>
        <dbReference type="EC" id="7.1.1.2"/>
    </reaction>
</comment>
<comment type="subcellular location">
    <subcellularLocation>
        <location evidence="4">Mitochondrion inner membrane</location>
        <topology evidence="4">Multi-pass membrane protein</topology>
    </subcellularLocation>
</comment>
<comment type="similarity">
    <text evidence="3">Belongs to the complex I subunit 2 family.</text>
</comment>
<dbReference type="EC" id="7.1.1.2"/>
<dbReference type="EMBL" id="EU352212">
    <property type="protein sequence ID" value="ABY51623.1"/>
    <property type="molecule type" value="Genomic_DNA"/>
</dbReference>
<dbReference type="RefSeq" id="YP_001649162.1">
    <property type="nucleotide sequence ID" value="NC_010241.1"/>
</dbReference>
<dbReference type="SMR" id="B0FWC6"/>
<dbReference type="FunCoup" id="B0FWC6">
    <property type="interactions" value="125"/>
</dbReference>
<dbReference type="STRING" id="7159.B0FWC6"/>
<dbReference type="PaxDb" id="7159-AAEL018658-PA"/>
<dbReference type="VEuPathDB" id="VectorBase:AAEL018658"/>
<dbReference type="eggNOG" id="KOG4668">
    <property type="taxonomic scope" value="Eukaryota"/>
</dbReference>
<dbReference type="HOGENOM" id="CLU_007100_1_3_1"/>
<dbReference type="InParanoid" id="B0FWC6"/>
<dbReference type="OrthoDB" id="4092844at2759"/>
<dbReference type="Proteomes" id="UP000008820">
    <property type="component" value="Mitochondrion MT"/>
</dbReference>
<dbReference type="Proteomes" id="UP000008820">
    <property type="component" value="Unassembled WGS sequence"/>
</dbReference>
<dbReference type="Proteomes" id="UP000682892">
    <property type="component" value="Mitochondrion MT"/>
</dbReference>
<dbReference type="GO" id="GO:0005743">
    <property type="term" value="C:mitochondrial inner membrane"/>
    <property type="evidence" value="ECO:0007669"/>
    <property type="project" value="UniProtKB-SubCell"/>
</dbReference>
<dbReference type="GO" id="GO:0008137">
    <property type="term" value="F:NADH dehydrogenase (ubiquinone) activity"/>
    <property type="evidence" value="ECO:0007669"/>
    <property type="project" value="UniProtKB-EC"/>
</dbReference>
<dbReference type="GO" id="GO:0006120">
    <property type="term" value="P:mitochondrial electron transport, NADH to ubiquinone"/>
    <property type="evidence" value="ECO:0007669"/>
    <property type="project" value="InterPro"/>
</dbReference>
<dbReference type="InterPro" id="IPR050175">
    <property type="entry name" value="Complex_I_Subunit_2"/>
</dbReference>
<dbReference type="InterPro" id="IPR010933">
    <property type="entry name" value="NADH_DH_su2_C"/>
</dbReference>
<dbReference type="InterPro" id="IPR003917">
    <property type="entry name" value="NADH_UbQ_OxRdtase_chain2"/>
</dbReference>
<dbReference type="InterPro" id="IPR001750">
    <property type="entry name" value="ND/Mrp_TM"/>
</dbReference>
<dbReference type="PANTHER" id="PTHR46552">
    <property type="entry name" value="NADH-UBIQUINONE OXIDOREDUCTASE CHAIN 2"/>
    <property type="match status" value="1"/>
</dbReference>
<dbReference type="PANTHER" id="PTHR46552:SF1">
    <property type="entry name" value="NADH-UBIQUINONE OXIDOREDUCTASE CHAIN 2"/>
    <property type="match status" value="1"/>
</dbReference>
<dbReference type="Pfam" id="PF06444">
    <property type="entry name" value="NADH_dehy_S2_C"/>
    <property type="match status" value="1"/>
</dbReference>
<dbReference type="Pfam" id="PF00361">
    <property type="entry name" value="Proton_antipo_M"/>
    <property type="match status" value="1"/>
</dbReference>
<dbReference type="PRINTS" id="PR01436">
    <property type="entry name" value="NADHDHGNASE2"/>
</dbReference>
<proteinExistence type="inferred from homology"/>
<keyword id="KW-0249">Electron transport</keyword>
<keyword id="KW-0472">Membrane</keyword>
<keyword id="KW-0496">Mitochondrion</keyword>
<keyword id="KW-0999">Mitochondrion inner membrane</keyword>
<keyword id="KW-0520">NAD</keyword>
<keyword id="KW-1185">Reference proteome</keyword>
<keyword id="KW-0679">Respiratory chain</keyword>
<keyword id="KW-1278">Translocase</keyword>
<keyword id="KW-0812">Transmembrane</keyword>
<keyword id="KW-1133">Transmembrane helix</keyword>
<keyword id="KW-0813">Transport</keyword>
<keyword id="KW-0830">Ubiquinone</keyword>
<gene>
    <name evidence="2" type="primary">mt:ND2</name>
    <name evidence="5" type="synonym">ND2</name>
</gene>
<evidence type="ECO:0000250" key="1"/>
<evidence type="ECO:0000250" key="2">
    <source>
        <dbReference type="UniProtKB" id="P03896"/>
    </source>
</evidence>
<evidence type="ECO:0000255" key="3"/>
<evidence type="ECO:0000305" key="4"/>
<evidence type="ECO:0000312" key="5">
    <source>
        <dbReference type="EMBL" id="ABY51623.1"/>
    </source>
</evidence>
<protein>
    <recommendedName>
        <fullName>NADH-ubiquinone oxidoreductase chain 2</fullName>
        <ecNumber>7.1.1.2</ecNumber>
    </recommendedName>
    <alternativeName>
        <fullName>NADH dehydrogenase subunit 2</fullName>
    </alternativeName>
</protein>
<sequence>MKKISNNIFFIMLISGTLITISSNSWLGAWMGLEINLLSFIPLMNEGKKNLMTSESSLKYFLTQAFASSILLFAIILMMMFFNENWMMNNNFNNLLILSTLLLKSGAAPFHFWFPGVMEGLNWINGLILMTWQKIAPLMLISYNLNINFFYFTILLSMIIGALGGLNQTSLRKLMAFSSINHIGWMLMAMMNNELLWLTYFLLYSILSMSIILMFNNFKLFHFNQIFNFSMMNPYIKFFMFLNLLSLGGLPPFLGFLPKWLVIQNLVEMNQLFLLFIAVCLTLITLYYYLRMSYSIYMLNYNKNSWMLMNSYSNNNLTLILTMNFISIMGLLIITLIYLIL</sequence>